<evidence type="ECO:0000255" key="1">
    <source>
        <dbReference type="HAMAP-Rule" id="MF_01315"/>
    </source>
</evidence>
<evidence type="ECO:0000256" key="2">
    <source>
        <dbReference type="SAM" id="MobiDB-lite"/>
    </source>
</evidence>
<evidence type="ECO:0000305" key="3"/>
<organism>
    <name type="scientific">Pyropia yezoensis</name>
    <name type="common">Susabi-nori</name>
    <name type="synonym">Porphyra yezoensis</name>
    <dbReference type="NCBI Taxonomy" id="2788"/>
    <lineage>
        <taxon>Eukaryota</taxon>
        <taxon>Rhodophyta</taxon>
        <taxon>Bangiophyceae</taxon>
        <taxon>Bangiales</taxon>
        <taxon>Bangiaceae</taxon>
        <taxon>Pyropia</taxon>
    </lineage>
</organism>
<reference key="1">
    <citation type="submission" date="2006-09" db="EMBL/GenBank/DDBJ databases">
        <title>Cloning and analysis of the Porphyra yezoensis gene for rps13.</title>
        <authorList>
            <person name="Wang M.Q."/>
            <person name="Mao Y.X."/>
        </authorList>
    </citation>
    <scope>NUCLEOTIDE SEQUENCE [GENOMIC DNA]</scope>
    <source>
        <strain>Qingdao</strain>
    </source>
</reference>
<reference key="2">
    <citation type="submission" date="2003-11" db="EMBL/GenBank/DDBJ databases">
        <title>Whole genome sequence of Porphyra yezoensis chloroplast.</title>
        <authorList>
            <person name="Kunimoto M."/>
            <person name="Morishima K."/>
            <person name="Yoshikawa M."/>
            <person name="Fukuda S."/>
            <person name="Kobayashi T."/>
            <person name="Kobayashi M."/>
            <person name="Okazaki T."/>
            <person name="Ohara I."/>
            <person name="Nakayama I."/>
        </authorList>
    </citation>
    <scope>NUCLEOTIDE SEQUENCE [LARGE SCALE GENOMIC DNA]</scope>
    <source>
        <strain>U-51</strain>
    </source>
</reference>
<comment type="function">
    <text evidence="1">Located at the top of the head of the 30S subunit, it contacts several helices of the 16S rRNA.</text>
</comment>
<comment type="subunit">
    <text>Part of the 30S ribosomal subunit.</text>
</comment>
<comment type="subcellular location">
    <subcellularLocation>
        <location>Plastid</location>
        <location>Chloroplast</location>
    </subcellularLocation>
</comment>
<comment type="similarity">
    <text evidence="1">Belongs to the universal ribosomal protein uS13 family.</text>
</comment>
<keyword id="KW-0150">Chloroplast</keyword>
<keyword id="KW-0934">Plastid</keyword>
<keyword id="KW-0687">Ribonucleoprotein</keyword>
<keyword id="KW-0689">Ribosomal protein</keyword>
<keyword id="KW-0694">RNA-binding</keyword>
<keyword id="KW-0699">rRNA-binding</keyword>
<gene>
    <name evidence="1" type="primary">rps13-2</name>
</gene>
<geneLocation type="chloroplast"/>
<sequence>MARIAGVDLPRNKRIEIALTYIYGIGLSRSKEILEKTNIDADIKCQDLNDQQVVSIREILESNYQIEGDLKRFESMSIKRLMEISTYRGRRHRLGLPLRGQRTRTNARTRRGGKKTVAGKKKAPRK</sequence>
<protein>
    <recommendedName>
        <fullName evidence="1">Small ribosomal subunit protein uS13c</fullName>
    </recommendedName>
    <alternativeName>
        <fullName evidence="3">30S ribosomal protein S13-2, chloroplastic</fullName>
    </alternativeName>
</protein>
<feature type="chain" id="PRO_0000276663" description="Small ribosomal subunit protein uS13c">
    <location>
        <begin position="1"/>
        <end position="126"/>
    </location>
</feature>
<feature type="region of interest" description="Disordered" evidence="2">
    <location>
        <begin position="97"/>
        <end position="126"/>
    </location>
</feature>
<feature type="compositionally biased region" description="Basic residues" evidence="2">
    <location>
        <begin position="101"/>
        <end position="126"/>
    </location>
</feature>
<feature type="sequence conflict" description="In Ref. 1; ABJ91310." evidence="3" ref="1">
    <original>T</original>
    <variation>I</variation>
    <location>
        <position position="105"/>
    </location>
</feature>
<name>RR13_PYRYE</name>
<proteinExistence type="inferred from homology"/>
<dbReference type="EMBL" id="DQ995195">
    <property type="protein sequence ID" value="ABJ91310.1"/>
    <property type="molecule type" value="Genomic_DNA"/>
</dbReference>
<dbReference type="EMBL" id="AP006715">
    <property type="protein sequence ID" value="BAE92418.1"/>
    <property type="molecule type" value="Genomic_DNA"/>
</dbReference>
<dbReference type="SMR" id="Q1XDJ3"/>
<dbReference type="GO" id="GO:0009507">
    <property type="term" value="C:chloroplast"/>
    <property type="evidence" value="ECO:0007669"/>
    <property type="project" value="UniProtKB-SubCell"/>
</dbReference>
<dbReference type="GO" id="GO:0005829">
    <property type="term" value="C:cytosol"/>
    <property type="evidence" value="ECO:0007669"/>
    <property type="project" value="TreeGrafter"/>
</dbReference>
<dbReference type="GO" id="GO:0015935">
    <property type="term" value="C:small ribosomal subunit"/>
    <property type="evidence" value="ECO:0007669"/>
    <property type="project" value="TreeGrafter"/>
</dbReference>
<dbReference type="GO" id="GO:0019843">
    <property type="term" value="F:rRNA binding"/>
    <property type="evidence" value="ECO:0007669"/>
    <property type="project" value="UniProtKB-UniRule"/>
</dbReference>
<dbReference type="GO" id="GO:0003735">
    <property type="term" value="F:structural constituent of ribosome"/>
    <property type="evidence" value="ECO:0007669"/>
    <property type="project" value="InterPro"/>
</dbReference>
<dbReference type="GO" id="GO:0006412">
    <property type="term" value="P:translation"/>
    <property type="evidence" value="ECO:0007669"/>
    <property type="project" value="UniProtKB-UniRule"/>
</dbReference>
<dbReference type="FunFam" id="1.10.8.50:FF:000001">
    <property type="entry name" value="30S ribosomal protein S13"/>
    <property type="match status" value="1"/>
</dbReference>
<dbReference type="FunFam" id="4.10.910.10:FF:000001">
    <property type="entry name" value="30S ribosomal protein S13"/>
    <property type="match status" value="1"/>
</dbReference>
<dbReference type="Gene3D" id="1.10.8.50">
    <property type="match status" value="1"/>
</dbReference>
<dbReference type="Gene3D" id="4.10.910.10">
    <property type="entry name" value="30s ribosomal protein s13, domain 2"/>
    <property type="match status" value="1"/>
</dbReference>
<dbReference type="HAMAP" id="MF_01315">
    <property type="entry name" value="Ribosomal_uS13"/>
    <property type="match status" value="1"/>
</dbReference>
<dbReference type="InterPro" id="IPR027437">
    <property type="entry name" value="Rbsml_uS13_C"/>
</dbReference>
<dbReference type="InterPro" id="IPR001892">
    <property type="entry name" value="Ribosomal_uS13"/>
</dbReference>
<dbReference type="InterPro" id="IPR010979">
    <property type="entry name" value="Ribosomal_uS13-like_H2TH"/>
</dbReference>
<dbReference type="InterPro" id="IPR019980">
    <property type="entry name" value="Ribosomal_uS13_bac-type"/>
</dbReference>
<dbReference type="InterPro" id="IPR018269">
    <property type="entry name" value="Ribosomal_uS13_CS"/>
</dbReference>
<dbReference type="NCBIfam" id="TIGR03631">
    <property type="entry name" value="uS13_bact"/>
    <property type="match status" value="1"/>
</dbReference>
<dbReference type="PANTHER" id="PTHR10871">
    <property type="entry name" value="30S RIBOSOMAL PROTEIN S13/40S RIBOSOMAL PROTEIN S18"/>
    <property type="match status" value="1"/>
</dbReference>
<dbReference type="PANTHER" id="PTHR10871:SF1">
    <property type="entry name" value="SMALL RIBOSOMAL SUBUNIT PROTEIN US13M"/>
    <property type="match status" value="1"/>
</dbReference>
<dbReference type="Pfam" id="PF00416">
    <property type="entry name" value="Ribosomal_S13"/>
    <property type="match status" value="1"/>
</dbReference>
<dbReference type="PIRSF" id="PIRSF002134">
    <property type="entry name" value="Ribosomal_S13"/>
    <property type="match status" value="1"/>
</dbReference>
<dbReference type="SUPFAM" id="SSF46946">
    <property type="entry name" value="S13-like H2TH domain"/>
    <property type="match status" value="1"/>
</dbReference>
<dbReference type="PROSITE" id="PS00646">
    <property type="entry name" value="RIBOSOMAL_S13_1"/>
    <property type="match status" value="1"/>
</dbReference>
<dbReference type="PROSITE" id="PS50159">
    <property type="entry name" value="RIBOSOMAL_S13_2"/>
    <property type="match status" value="1"/>
</dbReference>
<accession>Q1XDJ3</accession>
<accession>A0MMA2</accession>